<name>MNMA_PETMO</name>
<keyword id="KW-0067">ATP-binding</keyword>
<keyword id="KW-0963">Cytoplasm</keyword>
<keyword id="KW-1015">Disulfide bond</keyword>
<keyword id="KW-0547">Nucleotide-binding</keyword>
<keyword id="KW-0694">RNA-binding</keyword>
<keyword id="KW-0808">Transferase</keyword>
<keyword id="KW-0819">tRNA processing</keyword>
<keyword id="KW-0820">tRNA-binding</keyword>
<accession>A9BIS3</accession>
<reference key="1">
    <citation type="submission" date="2007-11" db="EMBL/GenBank/DDBJ databases">
        <title>Complete sequence of Petroga mobilis SJ95.</title>
        <authorList>
            <consortium name="US DOE Joint Genome Institute"/>
            <person name="Copeland A."/>
            <person name="Lucas S."/>
            <person name="Lapidus A."/>
            <person name="Barry K."/>
            <person name="Glavina del Rio T."/>
            <person name="Dalin E."/>
            <person name="Tice H."/>
            <person name="Pitluck S."/>
            <person name="Meincke L."/>
            <person name="Brettin T."/>
            <person name="Bruce D."/>
            <person name="Detter J.C."/>
            <person name="Han C."/>
            <person name="Kuske C.R."/>
            <person name="Schmutz J."/>
            <person name="Larimer F."/>
            <person name="Land M."/>
            <person name="Hauser L."/>
            <person name="Kyrpides N."/>
            <person name="Mikhailova N."/>
            <person name="Noll K."/>
            <person name="Richardson P."/>
        </authorList>
    </citation>
    <scope>NUCLEOTIDE SEQUENCE [LARGE SCALE GENOMIC DNA]</scope>
    <source>
        <strain>DSM 10674 / SJ95</strain>
    </source>
</reference>
<organism>
    <name type="scientific">Petrotoga mobilis (strain DSM 10674 / SJ95)</name>
    <dbReference type="NCBI Taxonomy" id="403833"/>
    <lineage>
        <taxon>Bacteria</taxon>
        <taxon>Thermotogati</taxon>
        <taxon>Thermotogota</taxon>
        <taxon>Thermotogae</taxon>
        <taxon>Petrotogales</taxon>
        <taxon>Petrotogaceae</taxon>
        <taxon>Petrotoga</taxon>
    </lineage>
</organism>
<dbReference type="EC" id="2.8.1.13" evidence="1"/>
<dbReference type="EMBL" id="CP000879">
    <property type="protein sequence ID" value="ABX32411.1"/>
    <property type="molecule type" value="Genomic_DNA"/>
</dbReference>
<dbReference type="RefSeq" id="WP_012209508.1">
    <property type="nucleotide sequence ID" value="NC_010003.1"/>
</dbReference>
<dbReference type="SMR" id="A9BIS3"/>
<dbReference type="STRING" id="403833.Pmob_1718"/>
<dbReference type="KEGG" id="pmo:Pmob_1718"/>
<dbReference type="eggNOG" id="COG0482">
    <property type="taxonomic scope" value="Bacteria"/>
</dbReference>
<dbReference type="HOGENOM" id="CLU_035188_1_0_0"/>
<dbReference type="OrthoDB" id="9800696at2"/>
<dbReference type="Proteomes" id="UP000000789">
    <property type="component" value="Chromosome"/>
</dbReference>
<dbReference type="GO" id="GO:0005737">
    <property type="term" value="C:cytoplasm"/>
    <property type="evidence" value="ECO:0007669"/>
    <property type="project" value="UniProtKB-SubCell"/>
</dbReference>
<dbReference type="GO" id="GO:0005524">
    <property type="term" value="F:ATP binding"/>
    <property type="evidence" value="ECO:0007669"/>
    <property type="project" value="UniProtKB-KW"/>
</dbReference>
<dbReference type="GO" id="GO:0000049">
    <property type="term" value="F:tRNA binding"/>
    <property type="evidence" value="ECO:0007669"/>
    <property type="project" value="UniProtKB-KW"/>
</dbReference>
<dbReference type="GO" id="GO:0103016">
    <property type="term" value="F:tRNA-uridine 2-sulfurtransferase activity"/>
    <property type="evidence" value="ECO:0007669"/>
    <property type="project" value="UniProtKB-EC"/>
</dbReference>
<dbReference type="GO" id="GO:0002143">
    <property type="term" value="P:tRNA wobble position uridine thiolation"/>
    <property type="evidence" value="ECO:0007669"/>
    <property type="project" value="TreeGrafter"/>
</dbReference>
<dbReference type="CDD" id="cd01998">
    <property type="entry name" value="MnmA_TRMU-like"/>
    <property type="match status" value="1"/>
</dbReference>
<dbReference type="Gene3D" id="2.30.30.280">
    <property type="entry name" value="Adenine nucleotide alpha hydrolases-like domains"/>
    <property type="match status" value="1"/>
</dbReference>
<dbReference type="Gene3D" id="3.40.50.620">
    <property type="entry name" value="HUPs"/>
    <property type="match status" value="1"/>
</dbReference>
<dbReference type="Gene3D" id="2.40.30.10">
    <property type="entry name" value="Translation factors"/>
    <property type="match status" value="1"/>
</dbReference>
<dbReference type="HAMAP" id="MF_00144">
    <property type="entry name" value="tRNA_thiouridyl_MnmA"/>
    <property type="match status" value="1"/>
</dbReference>
<dbReference type="InterPro" id="IPR004506">
    <property type="entry name" value="MnmA-like"/>
</dbReference>
<dbReference type="InterPro" id="IPR046885">
    <property type="entry name" value="MnmA-like_C"/>
</dbReference>
<dbReference type="InterPro" id="IPR046884">
    <property type="entry name" value="MnmA-like_central"/>
</dbReference>
<dbReference type="InterPro" id="IPR023382">
    <property type="entry name" value="MnmA-like_central_sf"/>
</dbReference>
<dbReference type="InterPro" id="IPR014729">
    <property type="entry name" value="Rossmann-like_a/b/a_fold"/>
</dbReference>
<dbReference type="NCBIfam" id="NF001138">
    <property type="entry name" value="PRK00143.1"/>
    <property type="match status" value="1"/>
</dbReference>
<dbReference type="NCBIfam" id="TIGR00420">
    <property type="entry name" value="trmU"/>
    <property type="match status" value="1"/>
</dbReference>
<dbReference type="PANTHER" id="PTHR11933:SF5">
    <property type="entry name" value="MITOCHONDRIAL TRNA-SPECIFIC 2-THIOURIDYLASE 1"/>
    <property type="match status" value="1"/>
</dbReference>
<dbReference type="PANTHER" id="PTHR11933">
    <property type="entry name" value="TRNA 5-METHYLAMINOMETHYL-2-THIOURIDYLATE -METHYLTRANSFERASE"/>
    <property type="match status" value="1"/>
</dbReference>
<dbReference type="Pfam" id="PF03054">
    <property type="entry name" value="tRNA_Me_trans"/>
    <property type="match status" value="1"/>
</dbReference>
<dbReference type="Pfam" id="PF20258">
    <property type="entry name" value="tRNA_Me_trans_C"/>
    <property type="match status" value="1"/>
</dbReference>
<dbReference type="Pfam" id="PF20259">
    <property type="entry name" value="tRNA_Me_trans_M"/>
    <property type="match status" value="1"/>
</dbReference>
<dbReference type="SUPFAM" id="SSF52402">
    <property type="entry name" value="Adenine nucleotide alpha hydrolases-like"/>
    <property type="match status" value="1"/>
</dbReference>
<gene>
    <name evidence="1" type="primary">mnmA</name>
    <name type="ordered locus">Pmob_1718</name>
</gene>
<sequence length="367" mass="41890">MSNKKVLMLMSGGVDSSVAAYLLKEQNYHVIGLHFKTVSDVVFSLIPEKKKVCCSPSDTQDALKIADKLDLDDFQIVDIKKEFKEKIIDYFIKTYKEGKTPNPCMLCNRFFKFGKALEIAHSYGADWVSSGHYLIKEYSNKYSTYIIKKGVDQYKDQSYFLSYIDKNTLPKLHFPLGNMYKVEIRDIANKIGLSVANKPDSQELCFIPDNDYRRFLKENGVTTEEGKVYDLEGNEIGTHTGYMNYTIGQRSGISYYKNANVKLHVYKIFPQKNVLIVAPTEEMYSKELIVQNVNFFVDFKEIEGFCRVRKKSEEKPAVVKKIADHTLKVSFKEPIFAVTPGQFATIYDESGVVLASGVINIKEMGEV</sequence>
<feature type="chain" id="PRO_0000349735" description="tRNA-specific 2-thiouridylase MnmA">
    <location>
        <begin position="1"/>
        <end position="367"/>
    </location>
</feature>
<feature type="region of interest" description="Interaction with tRNA" evidence="1">
    <location>
        <begin position="155"/>
        <end position="157"/>
    </location>
</feature>
<feature type="active site" description="Nucleophile" evidence="1">
    <location>
        <position position="107"/>
    </location>
</feature>
<feature type="active site" description="Cysteine persulfide intermediate" evidence="1">
    <location>
        <position position="205"/>
    </location>
</feature>
<feature type="binding site" evidence="1">
    <location>
        <begin position="9"/>
        <end position="16"/>
    </location>
    <ligand>
        <name>ATP</name>
        <dbReference type="ChEBI" id="CHEBI:30616"/>
    </ligand>
</feature>
<feature type="binding site" evidence="1">
    <location>
        <position position="35"/>
    </location>
    <ligand>
        <name>ATP</name>
        <dbReference type="ChEBI" id="CHEBI:30616"/>
    </ligand>
</feature>
<feature type="binding site" evidence="1">
    <location>
        <position position="131"/>
    </location>
    <ligand>
        <name>ATP</name>
        <dbReference type="ChEBI" id="CHEBI:30616"/>
    </ligand>
</feature>
<feature type="site" description="Interaction with tRNA" evidence="1">
    <location>
        <position position="132"/>
    </location>
</feature>
<feature type="site" description="Interaction with tRNA" evidence="1">
    <location>
        <position position="342"/>
    </location>
</feature>
<feature type="disulfide bond" description="Alternate" evidence="1">
    <location>
        <begin position="107"/>
        <end position="205"/>
    </location>
</feature>
<evidence type="ECO:0000255" key="1">
    <source>
        <dbReference type="HAMAP-Rule" id="MF_00144"/>
    </source>
</evidence>
<protein>
    <recommendedName>
        <fullName evidence="1">tRNA-specific 2-thiouridylase MnmA</fullName>
        <ecNumber evidence="1">2.8.1.13</ecNumber>
    </recommendedName>
</protein>
<comment type="function">
    <text evidence="1">Catalyzes the 2-thiolation of uridine at the wobble position (U34) of tRNA, leading to the formation of s(2)U34.</text>
</comment>
<comment type="catalytic activity">
    <reaction evidence="1">
        <text>S-sulfanyl-L-cysteinyl-[protein] + uridine(34) in tRNA + AH2 + ATP = 2-thiouridine(34) in tRNA + L-cysteinyl-[protein] + A + AMP + diphosphate + H(+)</text>
        <dbReference type="Rhea" id="RHEA:47032"/>
        <dbReference type="Rhea" id="RHEA-COMP:10131"/>
        <dbReference type="Rhea" id="RHEA-COMP:11726"/>
        <dbReference type="Rhea" id="RHEA-COMP:11727"/>
        <dbReference type="Rhea" id="RHEA-COMP:11728"/>
        <dbReference type="ChEBI" id="CHEBI:13193"/>
        <dbReference type="ChEBI" id="CHEBI:15378"/>
        <dbReference type="ChEBI" id="CHEBI:17499"/>
        <dbReference type="ChEBI" id="CHEBI:29950"/>
        <dbReference type="ChEBI" id="CHEBI:30616"/>
        <dbReference type="ChEBI" id="CHEBI:33019"/>
        <dbReference type="ChEBI" id="CHEBI:61963"/>
        <dbReference type="ChEBI" id="CHEBI:65315"/>
        <dbReference type="ChEBI" id="CHEBI:87170"/>
        <dbReference type="ChEBI" id="CHEBI:456215"/>
        <dbReference type="EC" id="2.8.1.13"/>
    </reaction>
</comment>
<comment type="subcellular location">
    <subcellularLocation>
        <location evidence="1">Cytoplasm</location>
    </subcellularLocation>
</comment>
<comment type="similarity">
    <text evidence="1">Belongs to the MnmA/TRMU family.</text>
</comment>
<proteinExistence type="inferred from homology"/>